<organism>
    <name type="scientific">Shigella boydii serotype 18 (strain CDC 3083-94 / BS512)</name>
    <dbReference type="NCBI Taxonomy" id="344609"/>
    <lineage>
        <taxon>Bacteria</taxon>
        <taxon>Pseudomonadati</taxon>
        <taxon>Pseudomonadota</taxon>
        <taxon>Gammaproteobacteria</taxon>
        <taxon>Enterobacterales</taxon>
        <taxon>Enterobacteriaceae</taxon>
        <taxon>Shigella</taxon>
    </lineage>
</organism>
<sequence>MDNAVDRHVFYISDGTAITAEVLGHAVMSQFPVTISSITLPFVENESRARAVKDQIDAIYHQTGVRPLVFYSIVLPEIRAIILQSEGFCQDIVQALVAPLQQEMKLDPTPIAHRTHGLNPNNLNKYDARIAAIDYTLAHDDGISLRNLDQAQVILLGVSRCGKTPTSLYLAMQFGIRTANYPFIADDMDNLVLPASLKPLQHKLFGLTIDPERLAAIREERRENSRYASLRQCRMEVAEVEALYRKNQIPWINSTNYSVEEIATKILDIMGLSRRMY</sequence>
<accession>B2U2K8</accession>
<keyword id="KW-0418">Kinase</keyword>
<keyword id="KW-0547">Nucleotide-binding</keyword>
<keyword id="KW-1185">Reference proteome</keyword>
<keyword id="KW-0723">Serine/threonine-protein kinase</keyword>
<keyword id="KW-0808">Transferase</keyword>
<protein>
    <recommendedName>
        <fullName evidence="1">Phosphoenolpyruvate synthase regulatory protein</fullName>
        <shortName evidence="1">PEP synthase regulatory protein</shortName>
        <shortName evidence="1">PSRP</shortName>
        <ecNumber evidence="1">2.7.11.33</ecNumber>
        <ecNumber evidence="1">2.7.4.28</ecNumber>
    </recommendedName>
    <alternativeName>
        <fullName evidence="1">Pyruvate, water dikinase regulatory protein</fullName>
    </alternativeName>
</protein>
<feature type="chain" id="PRO_1000136498" description="Phosphoenolpyruvate synthase regulatory protein">
    <location>
        <begin position="1"/>
        <end position="277"/>
    </location>
</feature>
<feature type="binding site" evidence="1">
    <location>
        <begin position="157"/>
        <end position="164"/>
    </location>
    <ligand>
        <name>ADP</name>
        <dbReference type="ChEBI" id="CHEBI:456216"/>
    </ligand>
</feature>
<dbReference type="EC" id="2.7.11.33" evidence="1"/>
<dbReference type="EC" id="2.7.4.28" evidence="1"/>
<dbReference type="EMBL" id="CP001063">
    <property type="protein sequence ID" value="ACD10496.1"/>
    <property type="molecule type" value="Genomic_DNA"/>
</dbReference>
<dbReference type="RefSeq" id="WP_000368051.1">
    <property type="nucleotide sequence ID" value="NC_010658.1"/>
</dbReference>
<dbReference type="SMR" id="B2U2K8"/>
<dbReference type="STRING" id="344609.SbBS512_E1907"/>
<dbReference type="KEGG" id="sbc:SbBS512_E1907"/>
<dbReference type="HOGENOM" id="CLU_046206_1_0_6"/>
<dbReference type="Proteomes" id="UP000001030">
    <property type="component" value="Chromosome"/>
</dbReference>
<dbReference type="GO" id="GO:0043531">
    <property type="term" value="F:ADP binding"/>
    <property type="evidence" value="ECO:0007669"/>
    <property type="project" value="UniProtKB-UniRule"/>
</dbReference>
<dbReference type="GO" id="GO:0005524">
    <property type="term" value="F:ATP binding"/>
    <property type="evidence" value="ECO:0007669"/>
    <property type="project" value="InterPro"/>
</dbReference>
<dbReference type="GO" id="GO:0016776">
    <property type="term" value="F:phosphotransferase activity, phosphate group as acceptor"/>
    <property type="evidence" value="ECO:0007669"/>
    <property type="project" value="UniProtKB-UniRule"/>
</dbReference>
<dbReference type="GO" id="GO:0004674">
    <property type="term" value="F:protein serine/threonine kinase activity"/>
    <property type="evidence" value="ECO:0007669"/>
    <property type="project" value="UniProtKB-UniRule"/>
</dbReference>
<dbReference type="HAMAP" id="MF_01062">
    <property type="entry name" value="PSRP"/>
    <property type="match status" value="1"/>
</dbReference>
<dbReference type="InterPro" id="IPR005177">
    <property type="entry name" value="Kinase-pyrophosphorylase"/>
</dbReference>
<dbReference type="InterPro" id="IPR026530">
    <property type="entry name" value="PSRP"/>
</dbReference>
<dbReference type="NCBIfam" id="NF003742">
    <property type="entry name" value="PRK05339.1"/>
    <property type="match status" value="1"/>
</dbReference>
<dbReference type="PANTHER" id="PTHR31756">
    <property type="entry name" value="PYRUVATE, PHOSPHATE DIKINASE REGULATORY PROTEIN 1, CHLOROPLASTIC"/>
    <property type="match status" value="1"/>
</dbReference>
<dbReference type="PANTHER" id="PTHR31756:SF3">
    <property type="entry name" value="PYRUVATE, PHOSPHATE DIKINASE REGULATORY PROTEIN 1, CHLOROPLASTIC"/>
    <property type="match status" value="1"/>
</dbReference>
<dbReference type="Pfam" id="PF03618">
    <property type="entry name" value="Kinase-PPPase"/>
    <property type="match status" value="1"/>
</dbReference>
<evidence type="ECO:0000255" key="1">
    <source>
        <dbReference type="HAMAP-Rule" id="MF_01062"/>
    </source>
</evidence>
<comment type="function">
    <text evidence="1">Bifunctional serine/threonine kinase and phosphorylase involved in the regulation of the phosphoenolpyruvate synthase (PEPS) by catalyzing its phosphorylation/dephosphorylation.</text>
</comment>
<comment type="catalytic activity">
    <reaction evidence="1">
        <text>[pyruvate, water dikinase] + ADP = [pyruvate, water dikinase]-phosphate + AMP + H(+)</text>
        <dbReference type="Rhea" id="RHEA:46020"/>
        <dbReference type="Rhea" id="RHEA-COMP:11425"/>
        <dbReference type="Rhea" id="RHEA-COMP:11426"/>
        <dbReference type="ChEBI" id="CHEBI:15378"/>
        <dbReference type="ChEBI" id="CHEBI:43176"/>
        <dbReference type="ChEBI" id="CHEBI:68546"/>
        <dbReference type="ChEBI" id="CHEBI:456215"/>
        <dbReference type="ChEBI" id="CHEBI:456216"/>
        <dbReference type="EC" id="2.7.11.33"/>
    </reaction>
</comment>
<comment type="catalytic activity">
    <reaction evidence="1">
        <text>[pyruvate, water dikinase]-phosphate + phosphate + H(+) = [pyruvate, water dikinase] + diphosphate</text>
        <dbReference type="Rhea" id="RHEA:48580"/>
        <dbReference type="Rhea" id="RHEA-COMP:11425"/>
        <dbReference type="Rhea" id="RHEA-COMP:11426"/>
        <dbReference type="ChEBI" id="CHEBI:15378"/>
        <dbReference type="ChEBI" id="CHEBI:33019"/>
        <dbReference type="ChEBI" id="CHEBI:43176"/>
        <dbReference type="ChEBI" id="CHEBI:43474"/>
        <dbReference type="ChEBI" id="CHEBI:68546"/>
        <dbReference type="EC" id="2.7.4.28"/>
    </reaction>
</comment>
<comment type="similarity">
    <text evidence="1">Belongs to the pyruvate, phosphate/water dikinase regulatory protein family. PSRP subfamily.</text>
</comment>
<proteinExistence type="inferred from homology"/>
<reference key="1">
    <citation type="submission" date="2008-05" db="EMBL/GenBank/DDBJ databases">
        <title>Complete sequence of Shigella boydii serotype 18 strain BS512.</title>
        <authorList>
            <person name="Rasko D.A."/>
            <person name="Rosovitz M."/>
            <person name="Maurelli A.T."/>
            <person name="Myers G."/>
            <person name="Seshadri R."/>
            <person name="Cer R."/>
            <person name="Jiang L."/>
            <person name="Ravel J."/>
            <person name="Sebastian Y."/>
        </authorList>
    </citation>
    <scope>NUCLEOTIDE SEQUENCE [LARGE SCALE GENOMIC DNA]</scope>
    <source>
        <strain>CDC 3083-94 / BS512</strain>
    </source>
</reference>
<gene>
    <name evidence="1" type="primary">ppsR</name>
    <name type="ordered locus">SbBS512_E1907</name>
</gene>
<name>PSRP_SHIB3</name>